<name>MIC60_RAT</name>
<sequence>MLRACQLSGVTVAAQSCLCGKFVLRPLRPCRRYSTSSSSGVTAGKIAGAGLLFVGGGIGGTILYAKWDSHFRESVEKTIPYSDKLFGMVLGSAPYTVPLPKKPIQSGPLKISSVSEVMTDSELPMAQTQETNGDTPASAAGDPAPEVEHEDTINTECPNTDEGTSTFVTAALAKSLEDALNQTATVTRQTITAQNAAVQAVKAHSSTLKTAMDNSEIAGEKKSAQWRTVEGALKERRKAVDEAADALLKAKEELEKMKTIIEDAKKREIAGATPYITAAEEKLHSMIVDLDSVVKKVQAAQSEAKVVSQYHELVVQARDDFRKELDSITPDITPGWKGMSISDLAGTLSTDDLNALIAHAHRRIDQLNRELAQQKATEKQHIELALERQKLEEKRAFDSAVAKALEHHRSEIQAEQDRKVEEVRDAMENEMRTQLRRQAAAHTDHLRDVLKVQEQELKFEFEQDLSEKLSEQELEFHRRSQEQMDNFTLDINTAYARLRGIEQAVQSHAVAEEEARKAHQLWLSVEALKYSMKTSSAEMPTIPLGSAVEAIRVSCSDNEFTQALTAAIPPESLTRGVYSEETLRARFYAVQKLAGRVAMIDETKNSLYQ</sequence>
<comment type="function">
    <text evidence="1">Component of the MICOS complex, a large protein complex of the mitochondrial inner membrane that plays crucial roles in the maintenance of crista junctions, inner membrane architecture, and formation of contact sites to the outer membrane. Plays an important role in the maintenance of the MICOS complex stability and the mitochondrial cristae morphology.</text>
</comment>
<comment type="subunit">
    <text evidence="1 2">Component of the mitochondrial contact site and cristae organizing system (MICOS) complex, composed of at least MICOS10/MIC10, CHCHD3/MIC19, CHCHD6/MIC25, APOOL/MIC27, IMMT/MIC60, APOO/MIC23/MIC26 and MICOS13/MIC13 (By similarity). This complex was also known under the names MINOS or MitOS complex. The MICOS complex associates with mitochondrial outer membrane proteins SAMM50, MTX1 and MTX2 (together described as components of the mitochondrial outer membrane sorting assembly machinery (SAM) complex) and DNAJC11, mitochondrial inner membrane protein TMEM11 and with HSPA9 (By similarity). The MICOS and SAM complexes together with DNAJC11 are part of a large protein complex spanning both membranes termed the mitochondrial intermembrane space bridging (MIB) complex (By similarity). Interacts with HSPA1A/HSPA1B and OPA1, preferentially with the soluble OPA1 form (By similarity). Interacts with MICOS13/MIC13, MICOS10/MIC10, CHCHD3/MIC19, CHCHD6/MIC25, SAMM50 and TMEM11 (By similarity). Interacts with APOO/MIC23/MIC26 and APOOL/MIC27 (By similarity). Interacts with ARMC1 (By similarity). Interacts with ARMC12 (By similarity).</text>
</comment>
<comment type="subcellular location">
    <subcellularLocation>
        <location evidence="1">Mitochondrion inner membrane</location>
        <topology evidence="3">Single-pass membrane protein</topology>
    </subcellularLocation>
    <subcellularLocation>
        <location evidence="1">Mitochondrion</location>
    </subcellularLocation>
</comment>
<comment type="similarity">
    <text evidence="6">Belongs to the MICOS complex subunit Mic60 family.</text>
</comment>
<comment type="sequence caution" evidence="6">
    <conflict type="miscellaneous discrepancy">
        <sequence resource="EMBL-CDS" id="AAI05842"/>
    </conflict>
    <text>Contaminating sequence. Potential poly-A sequence.</text>
</comment>
<evidence type="ECO:0000250" key="1">
    <source>
        <dbReference type="UniProtKB" id="Q16891"/>
    </source>
</evidence>
<evidence type="ECO:0000250" key="2">
    <source>
        <dbReference type="UniProtKB" id="Q8CAQ8"/>
    </source>
</evidence>
<evidence type="ECO:0000255" key="3"/>
<evidence type="ECO:0000256" key="4">
    <source>
        <dbReference type="SAM" id="MobiDB-lite"/>
    </source>
</evidence>
<evidence type="ECO:0000269" key="5">
    <source>
    </source>
</evidence>
<evidence type="ECO:0000305" key="6"/>
<evidence type="ECO:0000312" key="7">
    <source>
        <dbReference type="EMBL" id="AAI05842.1"/>
    </source>
</evidence>
<evidence type="ECO:0000312" key="8">
    <source>
        <dbReference type="RGD" id="1310684"/>
    </source>
</evidence>
<evidence type="ECO:0007744" key="9">
    <source>
    </source>
</evidence>
<feature type="transit peptide" description="Mitochondrion" evidence="3">
    <location>
        <begin position="1"/>
        <end position="33"/>
    </location>
</feature>
<feature type="chain" id="PRO_0000397215" description="MICOS complex subunit Mic60">
    <location>
        <begin position="34"/>
        <end position="609" status="greater than"/>
    </location>
</feature>
<feature type="topological domain" description="Mitochondrial matrix" evidence="3">
    <location>
        <begin position="34"/>
        <end position="45"/>
    </location>
</feature>
<feature type="transmembrane region" description="Helical" evidence="3">
    <location>
        <begin position="46"/>
        <end position="65"/>
    </location>
</feature>
<feature type="topological domain" description="Mitochondrial intermembrane" evidence="3">
    <location>
        <begin position="66"/>
        <end position="609" status="greater than"/>
    </location>
</feature>
<feature type="region of interest" description="Disordered" evidence="4">
    <location>
        <begin position="127"/>
        <end position="162"/>
    </location>
</feature>
<feature type="coiled-coil region" evidence="3">
    <location>
        <begin position="232"/>
        <end position="270"/>
    </location>
</feature>
<feature type="coiled-coil region" evidence="3">
    <location>
        <begin position="350"/>
        <end position="397"/>
    </location>
</feature>
<feature type="modified residue" description="Phosphoserine" evidence="1">
    <location>
        <position position="112"/>
    </location>
</feature>
<feature type="modified residue" description="Phosphoserine" evidence="1">
    <location>
        <position position="113"/>
    </location>
</feature>
<feature type="modified residue" description="N6-acetyllysine" evidence="1">
    <location>
        <position position="174"/>
    </location>
</feature>
<feature type="modified residue" description="Phosphoserine" evidence="9">
    <location>
        <position position="175"/>
    </location>
</feature>
<feature type="modified residue" description="Phosphoserine" evidence="1">
    <location>
        <position position="340"/>
    </location>
</feature>
<feature type="modified residue" description="Phosphoserine" evidence="1">
    <location>
        <position position="342"/>
    </location>
</feature>
<feature type="modified residue" description="N6-acetyllysine" evidence="1">
    <location>
        <position position="403"/>
    </location>
</feature>
<feature type="non-terminal residue" evidence="6">
    <location>
        <position position="609"/>
    </location>
</feature>
<accession>Q3KR86</accession>
<dbReference type="EMBL" id="BC105841">
    <property type="protein sequence ID" value="AAI05842.1"/>
    <property type="status" value="ALT_SEQ"/>
    <property type="molecule type" value="mRNA"/>
</dbReference>
<dbReference type="RefSeq" id="NP_001030100.1">
    <property type="nucleotide sequence ID" value="NM_001034928.1"/>
</dbReference>
<dbReference type="SMR" id="Q3KR86"/>
<dbReference type="BioGRID" id="260179">
    <property type="interactions" value="8"/>
</dbReference>
<dbReference type="FunCoup" id="Q3KR86">
    <property type="interactions" value="2070"/>
</dbReference>
<dbReference type="IntAct" id="Q3KR86">
    <property type="interactions" value="4"/>
</dbReference>
<dbReference type="MINT" id="Q3KR86"/>
<dbReference type="STRING" id="10116.ENSRNOP00000069486"/>
<dbReference type="GlyGen" id="Q3KR86">
    <property type="glycosylation" value="4 sites, 1 O-linked glycan (4 sites)"/>
</dbReference>
<dbReference type="iPTMnet" id="Q3KR86"/>
<dbReference type="PhosphoSitePlus" id="Q3KR86"/>
<dbReference type="jPOST" id="Q3KR86"/>
<dbReference type="PaxDb" id="10116-ENSRNOP00000051091"/>
<dbReference type="PeptideAtlas" id="Q3KR86"/>
<dbReference type="GeneID" id="312444"/>
<dbReference type="KEGG" id="rno:312444"/>
<dbReference type="UCSC" id="RGD:1310684">
    <property type="organism name" value="rat"/>
</dbReference>
<dbReference type="AGR" id="RGD:1310684"/>
<dbReference type="CTD" id="10989"/>
<dbReference type="RGD" id="1310684">
    <property type="gene designation" value="Immt"/>
</dbReference>
<dbReference type="eggNOG" id="KOG1854">
    <property type="taxonomic scope" value="Eukaryota"/>
</dbReference>
<dbReference type="InParanoid" id="Q3KR86"/>
<dbReference type="OrthoDB" id="10261039at2759"/>
<dbReference type="Proteomes" id="UP000002494">
    <property type="component" value="Unplaced"/>
</dbReference>
<dbReference type="GO" id="GO:0061617">
    <property type="term" value="C:MICOS complex"/>
    <property type="evidence" value="ECO:0000266"/>
    <property type="project" value="RGD"/>
</dbReference>
<dbReference type="GO" id="GO:0005743">
    <property type="term" value="C:mitochondrial inner membrane"/>
    <property type="evidence" value="ECO:0000266"/>
    <property type="project" value="RGD"/>
</dbReference>
<dbReference type="GO" id="GO:0005758">
    <property type="term" value="C:mitochondrial intermembrane space"/>
    <property type="evidence" value="ECO:0000266"/>
    <property type="project" value="RGD"/>
</dbReference>
<dbReference type="GO" id="GO:0005739">
    <property type="term" value="C:mitochondrion"/>
    <property type="evidence" value="ECO:0000266"/>
    <property type="project" value="RGD"/>
</dbReference>
<dbReference type="GO" id="GO:0042407">
    <property type="term" value="P:cristae formation"/>
    <property type="evidence" value="ECO:0000266"/>
    <property type="project" value="RGD"/>
</dbReference>
<dbReference type="GO" id="GO:0051560">
    <property type="term" value="P:mitochondrial calcium ion homeostasis"/>
    <property type="evidence" value="ECO:0000266"/>
    <property type="project" value="RGD"/>
</dbReference>
<dbReference type="GO" id="GO:0070050">
    <property type="term" value="P:neuron cellular homeostasis"/>
    <property type="evidence" value="ECO:0000266"/>
    <property type="project" value="RGD"/>
</dbReference>
<dbReference type="InterPro" id="IPR019133">
    <property type="entry name" value="MIC60"/>
</dbReference>
<dbReference type="PANTHER" id="PTHR15415:SF7">
    <property type="entry name" value="MICOS COMPLEX SUBUNIT MIC60"/>
    <property type="match status" value="1"/>
</dbReference>
<dbReference type="PANTHER" id="PTHR15415">
    <property type="entry name" value="MITOFILIN"/>
    <property type="match status" value="1"/>
</dbReference>
<dbReference type="Pfam" id="PF09731">
    <property type="entry name" value="Mitofilin"/>
    <property type="match status" value="1"/>
</dbReference>
<protein>
    <recommendedName>
        <fullName>MICOS complex subunit Mic60</fullName>
    </recommendedName>
    <alternativeName>
        <fullName evidence="2 7">Mitochondrial inner membrane protein</fullName>
    </alternativeName>
    <alternativeName>
        <fullName evidence="2">Mitofilin</fullName>
    </alternativeName>
</protein>
<gene>
    <name evidence="7 8" type="primary">Immt</name>
    <name type="synonym">Mic60</name>
</gene>
<keyword id="KW-0007">Acetylation</keyword>
<keyword id="KW-0175">Coiled coil</keyword>
<keyword id="KW-0472">Membrane</keyword>
<keyword id="KW-0496">Mitochondrion</keyword>
<keyword id="KW-0999">Mitochondrion inner membrane</keyword>
<keyword id="KW-0597">Phosphoprotein</keyword>
<keyword id="KW-1185">Reference proteome</keyword>
<keyword id="KW-0809">Transit peptide</keyword>
<keyword id="KW-0812">Transmembrane</keyword>
<keyword id="KW-1133">Transmembrane helix</keyword>
<proteinExistence type="evidence at protein level"/>
<organism>
    <name type="scientific">Rattus norvegicus</name>
    <name type="common">Rat</name>
    <dbReference type="NCBI Taxonomy" id="10116"/>
    <lineage>
        <taxon>Eukaryota</taxon>
        <taxon>Metazoa</taxon>
        <taxon>Chordata</taxon>
        <taxon>Craniata</taxon>
        <taxon>Vertebrata</taxon>
        <taxon>Euteleostomi</taxon>
        <taxon>Mammalia</taxon>
        <taxon>Eutheria</taxon>
        <taxon>Euarchontoglires</taxon>
        <taxon>Glires</taxon>
        <taxon>Rodentia</taxon>
        <taxon>Myomorpha</taxon>
        <taxon>Muroidea</taxon>
        <taxon>Muridae</taxon>
        <taxon>Murinae</taxon>
        <taxon>Rattus</taxon>
    </lineage>
</organism>
<reference evidence="7" key="1">
    <citation type="journal article" date="2004" name="Genome Res.">
        <title>The status, quality, and expansion of the NIH full-length cDNA project: the Mammalian Gene Collection (MGC).</title>
        <authorList>
            <consortium name="The MGC Project Team"/>
        </authorList>
    </citation>
    <scope>NUCLEOTIDE SEQUENCE [LARGE SCALE MRNA]</scope>
    <source>
        <strain evidence="5">Brown Norway</strain>
        <tissue evidence="7">Testis</tissue>
    </source>
</reference>
<reference evidence="6" key="2">
    <citation type="submission" date="2009-01" db="UniProtKB">
        <authorList>
            <person name="Maurya D.K."/>
            <person name="Bhargava P."/>
        </authorList>
    </citation>
    <scope>IDENTIFICATION BY MASS SPECTROMETRY</scope>
</reference>
<reference key="3">
    <citation type="journal article" date="2012" name="Nat. Commun.">
        <title>Quantitative maps of protein phosphorylation sites across 14 different rat organs and tissues.</title>
        <authorList>
            <person name="Lundby A."/>
            <person name="Secher A."/>
            <person name="Lage K."/>
            <person name="Nordsborg N.B."/>
            <person name="Dmytriyev A."/>
            <person name="Lundby C."/>
            <person name="Olsen J.V."/>
        </authorList>
    </citation>
    <scope>PHOSPHORYLATION [LARGE SCALE ANALYSIS] AT SER-175</scope>
    <scope>IDENTIFICATION BY MASS SPECTROMETRY [LARGE SCALE ANALYSIS]</scope>
</reference>